<organism>
    <name type="scientific">Gallus gallus</name>
    <name type="common">Chicken</name>
    <dbReference type="NCBI Taxonomy" id="9031"/>
    <lineage>
        <taxon>Eukaryota</taxon>
        <taxon>Metazoa</taxon>
        <taxon>Chordata</taxon>
        <taxon>Craniata</taxon>
        <taxon>Vertebrata</taxon>
        <taxon>Euteleostomi</taxon>
        <taxon>Archelosauria</taxon>
        <taxon>Archosauria</taxon>
        <taxon>Dinosauria</taxon>
        <taxon>Saurischia</taxon>
        <taxon>Theropoda</taxon>
        <taxon>Coelurosauria</taxon>
        <taxon>Aves</taxon>
        <taxon>Neognathae</taxon>
        <taxon>Galloanserae</taxon>
        <taxon>Galliformes</taxon>
        <taxon>Phasianidae</taxon>
        <taxon>Phasianinae</taxon>
        <taxon>Gallus</taxon>
    </lineage>
</organism>
<sequence>MSFTSSKNSSYRRMFGGGSRPSSGTRYITSSTRYSLGSALRPSSARYVSASPGGVYRTKATSVRLRSSMPPMRMHDAVDFTLADAINTEFKANRTNEKVELQELNDRFANYIDKVRFLEQQNKILLAELEQLKGKGTSRLGDLYEEEMRDVRRQVDQLTNDKARVEVERDNLADDIMRLREKLQEEMLQREEAESTLQSFRQDVDNASLAGLDLERPVESLQEEIVFLKKLHDEEIRELQAQLQEQHIQIDMDVSKPDLTAALRDVRQQYESVAAKNLQEAEEWYKSKFADLSEAANRNNDALRQAKQEANEYRRQIQSLTCEVDALKGSNESLERQMREMEENFAVEAANYQDTIGRLQDEIQNMKEEMARHLREYQDLLNVKMALDIEIATYRKLLEGEESRINMPIPTFASLNLRETNIESQPIVDTHSKRTLLIKTVETRDGQVINETSQHHDDLE</sequence>
<comment type="function">
    <text evidence="2">Vimentins are class-III intermediate filaments found in various non-epithelial cells, especially mesenchymal cells. Vimentin is attached to the nucleus, endoplasmic reticulum, and mitochondria, either laterally or terminally. Plays a role in cell directional movement, orientation, cell sheet organization and Golgi complex polarization at the cell migration front (By similarity).</text>
</comment>
<comment type="subunit">
    <text evidence="1">Homomer assembled from elementary dimers. Component of a complex composed at least of ACTB, AP2M1, AP2A1, AP2A2, MEGF10 and VIM (By similarity).</text>
</comment>
<comment type="subcellular location">
    <subcellularLocation>
        <location evidence="3">Cytoplasm</location>
    </subcellularLocation>
    <subcellularLocation>
        <location evidence="3">Cytoplasm</location>
        <location evidence="3">Cytoskeleton</location>
    </subcellularLocation>
    <subcellularLocation>
        <location evidence="5">Nucleus matrix</location>
    </subcellularLocation>
    <subcellularLocation>
        <location evidence="4">Cell membrane</location>
    </subcellularLocation>
</comment>
<comment type="domain">
    <text evidence="3">The central alpha-helical coiled-coil IF rod domain mediates elementary homodimerization.</text>
</comment>
<comment type="PTM">
    <text evidence="3">One of the most prominent phosphoproteins in various cells of mesenchymal origin. Phosphorylation is enhanced during cell division, at which time vimentin filaments are significantly reorganized.</text>
</comment>
<comment type="similarity">
    <text evidence="6">Belongs to the intermediate filament family.</text>
</comment>
<evidence type="ECO:0000250" key="1"/>
<evidence type="ECO:0000250" key="2">
    <source>
        <dbReference type="UniProtKB" id="A0A8C0N8E3"/>
    </source>
</evidence>
<evidence type="ECO:0000250" key="3">
    <source>
        <dbReference type="UniProtKB" id="P08670"/>
    </source>
</evidence>
<evidence type="ECO:0000250" key="4">
    <source>
        <dbReference type="UniProtKB" id="P20152"/>
    </source>
</evidence>
<evidence type="ECO:0000250" key="5">
    <source>
        <dbReference type="UniProtKB" id="P31000"/>
    </source>
</evidence>
<evidence type="ECO:0000255" key="6">
    <source>
        <dbReference type="PROSITE-ProRule" id="PRU01188"/>
    </source>
</evidence>
<evidence type="ECO:0000256" key="7">
    <source>
        <dbReference type="SAM" id="MobiDB-lite"/>
    </source>
</evidence>
<accession>P09654</accession>
<accession>Q91023</accession>
<protein>
    <recommendedName>
        <fullName>Vimentin</fullName>
    </recommendedName>
</protein>
<reference key="1">
    <citation type="journal article" date="1987" name="J. Biol. Chem.">
        <title>The chicken vimentin gene. Nucleotide sequence, regulatory elements, and comparison to the hamster gene.</title>
        <authorList>
            <person name="Zehner Z.E."/>
            <person name="Li Y."/>
            <person name="Roe B.A."/>
            <person name="Paterson B.M."/>
            <person name="Sax C.M."/>
        </authorList>
    </citation>
    <scope>NUCLEOTIDE SEQUENCE [GENOMIC DNA]</scope>
</reference>
<reference key="2">
    <citation type="journal article" date="1983" name="Proc. Natl. Acad. Sci. U.S.A.">
        <title>Characterization of the chicken vimentin gene: single copy gene producing multiple mRNAs.</title>
        <authorList>
            <person name="Zehner Z.E."/>
            <person name="Paterson B.M."/>
        </authorList>
    </citation>
    <scope>NUCLEOTIDE SEQUENCE [GENOMIC DNA] OF 454-460</scope>
</reference>
<feature type="initiator methionine" description="Removed" evidence="3">
    <location>
        <position position="1"/>
    </location>
</feature>
<feature type="chain" id="PRO_0000063761" description="Vimentin">
    <location>
        <begin position="2"/>
        <end position="460"/>
    </location>
</feature>
<feature type="domain" description="IF rod" evidence="6">
    <location>
        <begin position="97"/>
        <end position="405"/>
    </location>
</feature>
<feature type="region of interest" description="Disordered" evidence="7">
    <location>
        <begin position="1"/>
        <end position="27"/>
    </location>
</feature>
<feature type="region of interest" description="Head">
    <location>
        <begin position="2"/>
        <end position="89"/>
    </location>
</feature>
<feature type="region of interest" description="Coil 1A">
    <location>
        <begin position="90"/>
        <end position="125"/>
    </location>
</feature>
<feature type="region of interest" description="Linker 1">
    <location>
        <begin position="126"/>
        <end position="147"/>
    </location>
</feature>
<feature type="region of interest" description="Coil 1B">
    <location>
        <begin position="148"/>
        <end position="239"/>
    </location>
</feature>
<feature type="region of interest" description="Linker 12">
    <location>
        <begin position="240"/>
        <end position="262"/>
    </location>
</feature>
<feature type="region of interest" description="Coil 2">
    <location>
        <begin position="263"/>
        <end position="401"/>
    </location>
</feature>
<feature type="region of interest" description="Tail">
    <location>
        <begin position="402"/>
        <end position="460"/>
    </location>
</feature>
<feature type="coiled-coil region">
    <location>
        <begin position="90"/>
        <end position="125"/>
    </location>
</feature>
<feature type="coiled-coil region">
    <location>
        <begin position="148"/>
        <end position="239"/>
    </location>
</feature>
<feature type="coiled-coil region">
    <location>
        <begin position="297"/>
        <end position="401"/>
    </location>
</feature>
<feature type="compositionally biased region" description="Polar residues" evidence="7">
    <location>
        <begin position="1"/>
        <end position="11"/>
    </location>
</feature>
<feature type="site" description="Stutter" evidence="1">
    <location>
        <position position="345"/>
    </location>
</feature>
<gene>
    <name type="primary">VIM</name>
</gene>
<keyword id="KW-1003">Cell membrane</keyword>
<keyword id="KW-0175">Coiled coil</keyword>
<keyword id="KW-0963">Cytoplasm</keyword>
<keyword id="KW-0206">Cytoskeleton</keyword>
<keyword id="KW-0403">Intermediate filament</keyword>
<keyword id="KW-0472">Membrane</keyword>
<keyword id="KW-0539">Nucleus</keyword>
<keyword id="KW-0597">Phosphoprotein</keyword>
<keyword id="KW-1185">Reference proteome</keyword>
<name>VIME_CHICK</name>
<proteinExistence type="inferred from homology"/>
<dbReference type="EMBL" id="M15852">
    <property type="protein sequence ID" value="AAA49134.1"/>
    <property type="molecule type" value="Genomic_DNA"/>
</dbReference>
<dbReference type="EMBL" id="M15850">
    <property type="protein sequence ID" value="AAA49134.1"/>
    <property type="status" value="JOINED"/>
    <property type="molecule type" value="Genomic_DNA"/>
</dbReference>
<dbReference type="EMBL" id="M15851">
    <property type="protein sequence ID" value="AAA49134.1"/>
    <property type="status" value="JOINED"/>
    <property type="molecule type" value="Genomic_DNA"/>
</dbReference>
<dbReference type="EMBL" id="V00447">
    <property type="protein sequence ID" value="CAA23726.2"/>
    <property type="molecule type" value="Genomic_DNA"/>
</dbReference>
<dbReference type="PIR" id="A29329">
    <property type="entry name" value="A29329"/>
</dbReference>
<dbReference type="SMR" id="P09654"/>
<dbReference type="BioGRID" id="681466">
    <property type="interactions" value="1"/>
</dbReference>
<dbReference type="FunCoup" id="P09654">
    <property type="interactions" value="1600"/>
</dbReference>
<dbReference type="IntAct" id="P09654">
    <property type="interactions" value="1"/>
</dbReference>
<dbReference type="STRING" id="9031.ENSGALP00000014107"/>
<dbReference type="GlyGen" id="P09654">
    <property type="glycosylation" value="1 site, 1 O-linked glycan (1 site)"/>
</dbReference>
<dbReference type="PaxDb" id="9031-ENSGALP00000014107"/>
<dbReference type="VEuPathDB" id="HostDB:geneid_420519"/>
<dbReference type="eggNOG" id="KOG0977">
    <property type="taxonomic scope" value="Eukaryota"/>
</dbReference>
<dbReference type="InParanoid" id="P09654"/>
<dbReference type="OrthoDB" id="2441647at2759"/>
<dbReference type="PhylomeDB" id="P09654"/>
<dbReference type="Proteomes" id="UP000000539">
    <property type="component" value="Unassembled WGS sequence"/>
</dbReference>
<dbReference type="GO" id="GO:0030424">
    <property type="term" value="C:axon"/>
    <property type="evidence" value="ECO:0000318"/>
    <property type="project" value="GO_Central"/>
</dbReference>
<dbReference type="GO" id="GO:0042995">
    <property type="term" value="C:cell projection"/>
    <property type="evidence" value="ECO:0000314"/>
    <property type="project" value="AgBase"/>
</dbReference>
<dbReference type="GO" id="GO:0005737">
    <property type="term" value="C:cytoplasm"/>
    <property type="evidence" value="ECO:0000250"/>
    <property type="project" value="UniProtKB"/>
</dbReference>
<dbReference type="GO" id="GO:0005882">
    <property type="term" value="C:intermediate filament"/>
    <property type="evidence" value="ECO:0000250"/>
    <property type="project" value="UniProtKB"/>
</dbReference>
<dbReference type="GO" id="GO:0016363">
    <property type="term" value="C:nuclear matrix"/>
    <property type="evidence" value="ECO:0007669"/>
    <property type="project" value="UniProtKB-SubCell"/>
</dbReference>
<dbReference type="GO" id="GO:0005886">
    <property type="term" value="C:plasma membrane"/>
    <property type="evidence" value="ECO:0000318"/>
    <property type="project" value="GO_Central"/>
</dbReference>
<dbReference type="GO" id="GO:0005200">
    <property type="term" value="F:structural constituent of cytoskeleton"/>
    <property type="evidence" value="ECO:0000318"/>
    <property type="project" value="GO_Central"/>
</dbReference>
<dbReference type="GO" id="GO:0045109">
    <property type="term" value="P:intermediate filament organization"/>
    <property type="evidence" value="ECO:0000318"/>
    <property type="project" value="GO_Central"/>
</dbReference>
<dbReference type="GO" id="GO:0010634">
    <property type="term" value="P:positive regulation of epithelial cell migration"/>
    <property type="evidence" value="ECO:0000250"/>
    <property type="project" value="UniProtKB"/>
</dbReference>
<dbReference type="FunFam" id="1.20.5.1160:FF:000001">
    <property type="entry name" value="Keratin type II"/>
    <property type="match status" value="1"/>
</dbReference>
<dbReference type="FunFam" id="1.20.5.170:FF:000002">
    <property type="entry name" value="Type I keratin KA11"/>
    <property type="match status" value="1"/>
</dbReference>
<dbReference type="FunFam" id="1.20.5.500:FF:000001">
    <property type="entry name" value="Type II keratin 23"/>
    <property type="match status" value="1"/>
</dbReference>
<dbReference type="Gene3D" id="1.20.5.170">
    <property type="match status" value="1"/>
</dbReference>
<dbReference type="Gene3D" id="1.20.5.500">
    <property type="entry name" value="Single helix bin"/>
    <property type="match status" value="1"/>
</dbReference>
<dbReference type="Gene3D" id="1.20.5.1160">
    <property type="entry name" value="Vasodilator-stimulated phosphoprotein"/>
    <property type="match status" value="1"/>
</dbReference>
<dbReference type="InterPro" id="IPR018039">
    <property type="entry name" value="IF_conserved"/>
</dbReference>
<dbReference type="InterPro" id="IPR039008">
    <property type="entry name" value="IF_rod_dom"/>
</dbReference>
<dbReference type="InterPro" id="IPR006821">
    <property type="entry name" value="Intermed_filament_DNA-bd"/>
</dbReference>
<dbReference type="InterPro" id="IPR050405">
    <property type="entry name" value="Intermediate_filament"/>
</dbReference>
<dbReference type="PANTHER" id="PTHR45652">
    <property type="entry name" value="GLIAL FIBRILLARY ACIDIC PROTEIN"/>
    <property type="match status" value="1"/>
</dbReference>
<dbReference type="PANTHER" id="PTHR45652:SF5">
    <property type="entry name" value="VIMENTIN"/>
    <property type="match status" value="1"/>
</dbReference>
<dbReference type="Pfam" id="PF00038">
    <property type="entry name" value="Filament"/>
    <property type="match status" value="1"/>
</dbReference>
<dbReference type="Pfam" id="PF04732">
    <property type="entry name" value="Filament_head"/>
    <property type="match status" value="1"/>
</dbReference>
<dbReference type="SMART" id="SM01391">
    <property type="entry name" value="Filament"/>
    <property type="match status" value="1"/>
</dbReference>
<dbReference type="SUPFAM" id="SSF64593">
    <property type="entry name" value="Intermediate filament protein, coiled coil region"/>
    <property type="match status" value="2"/>
</dbReference>
<dbReference type="PROSITE" id="PS00226">
    <property type="entry name" value="IF_ROD_1"/>
    <property type="match status" value="1"/>
</dbReference>
<dbReference type="PROSITE" id="PS51842">
    <property type="entry name" value="IF_ROD_2"/>
    <property type="match status" value="1"/>
</dbReference>